<keyword id="KW-0488">Methylation</keyword>
<keyword id="KW-0687">Ribonucleoprotein</keyword>
<keyword id="KW-0689">Ribosomal protein</keyword>
<keyword id="KW-0694">RNA-binding</keyword>
<keyword id="KW-0699">rRNA-binding</keyword>
<keyword id="KW-0820">tRNA-binding</keyword>
<reference key="1">
    <citation type="submission" date="2008-10" db="EMBL/GenBank/DDBJ databases">
        <title>Genome sequence of Ureaplasma urealyticum serovar 10 ATCC-33699.</title>
        <authorList>
            <person name="Shrivastava S."/>
            <person name="Methe B.A."/>
            <person name="Glass J."/>
            <person name="White K."/>
            <person name="Duffy L.B."/>
        </authorList>
    </citation>
    <scope>NUCLEOTIDE SEQUENCE [LARGE SCALE GENOMIC DNA]</scope>
    <source>
        <strain>ATCC 33699 / Western</strain>
    </source>
</reference>
<dbReference type="EMBL" id="CP001184">
    <property type="protein sequence ID" value="ACI59740.1"/>
    <property type="molecule type" value="Genomic_DNA"/>
</dbReference>
<dbReference type="RefSeq" id="WP_004026220.1">
    <property type="nucleotide sequence ID" value="NC_011374.1"/>
</dbReference>
<dbReference type="SMR" id="B5ZC34"/>
<dbReference type="STRING" id="565575.UUR10_0614"/>
<dbReference type="GeneID" id="93849074"/>
<dbReference type="KEGG" id="uue:UUR10_0614"/>
<dbReference type="eggNOG" id="COG0048">
    <property type="taxonomic scope" value="Bacteria"/>
</dbReference>
<dbReference type="HOGENOM" id="CLU_104295_1_2_14"/>
<dbReference type="OrthoDB" id="9802366at2"/>
<dbReference type="Proteomes" id="UP000002018">
    <property type="component" value="Chromosome"/>
</dbReference>
<dbReference type="GO" id="GO:0015935">
    <property type="term" value="C:small ribosomal subunit"/>
    <property type="evidence" value="ECO:0007669"/>
    <property type="project" value="InterPro"/>
</dbReference>
<dbReference type="GO" id="GO:0019843">
    <property type="term" value="F:rRNA binding"/>
    <property type="evidence" value="ECO:0007669"/>
    <property type="project" value="UniProtKB-UniRule"/>
</dbReference>
<dbReference type="GO" id="GO:0003735">
    <property type="term" value="F:structural constituent of ribosome"/>
    <property type="evidence" value="ECO:0007669"/>
    <property type="project" value="InterPro"/>
</dbReference>
<dbReference type="GO" id="GO:0000049">
    <property type="term" value="F:tRNA binding"/>
    <property type="evidence" value="ECO:0007669"/>
    <property type="project" value="UniProtKB-UniRule"/>
</dbReference>
<dbReference type="GO" id="GO:0006412">
    <property type="term" value="P:translation"/>
    <property type="evidence" value="ECO:0007669"/>
    <property type="project" value="UniProtKB-UniRule"/>
</dbReference>
<dbReference type="CDD" id="cd03368">
    <property type="entry name" value="Ribosomal_S12"/>
    <property type="match status" value="1"/>
</dbReference>
<dbReference type="FunFam" id="2.40.50.140:FF:000099">
    <property type="entry name" value="Ribosomal protein S12, mitochondrial"/>
    <property type="match status" value="1"/>
</dbReference>
<dbReference type="Gene3D" id="2.40.50.140">
    <property type="entry name" value="Nucleic acid-binding proteins"/>
    <property type="match status" value="1"/>
</dbReference>
<dbReference type="HAMAP" id="MF_00403_B">
    <property type="entry name" value="Ribosomal_uS12_B"/>
    <property type="match status" value="1"/>
</dbReference>
<dbReference type="InterPro" id="IPR012340">
    <property type="entry name" value="NA-bd_OB-fold"/>
</dbReference>
<dbReference type="InterPro" id="IPR006032">
    <property type="entry name" value="Ribosomal_uS12"/>
</dbReference>
<dbReference type="InterPro" id="IPR005679">
    <property type="entry name" value="Ribosomal_uS12_bac"/>
</dbReference>
<dbReference type="NCBIfam" id="TIGR00981">
    <property type="entry name" value="rpsL_bact"/>
    <property type="match status" value="1"/>
</dbReference>
<dbReference type="PANTHER" id="PTHR11652">
    <property type="entry name" value="30S RIBOSOMAL PROTEIN S12 FAMILY MEMBER"/>
    <property type="match status" value="1"/>
</dbReference>
<dbReference type="Pfam" id="PF00164">
    <property type="entry name" value="Ribosom_S12_S23"/>
    <property type="match status" value="1"/>
</dbReference>
<dbReference type="PIRSF" id="PIRSF002133">
    <property type="entry name" value="Ribosomal_S12/S23"/>
    <property type="match status" value="1"/>
</dbReference>
<dbReference type="PRINTS" id="PR01034">
    <property type="entry name" value="RIBOSOMALS12"/>
</dbReference>
<dbReference type="SUPFAM" id="SSF50249">
    <property type="entry name" value="Nucleic acid-binding proteins"/>
    <property type="match status" value="1"/>
</dbReference>
<dbReference type="PROSITE" id="PS00055">
    <property type="entry name" value="RIBOSOMAL_S12"/>
    <property type="match status" value="1"/>
</dbReference>
<evidence type="ECO:0000250" key="1"/>
<evidence type="ECO:0000255" key="2">
    <source>
        <dbReference type="HAMAP-Rule" id="MF_00403"/>
    </source>
</evidence>
<evidence type="ECO:0000256" key="3">
    <source>
        <dbReference type="SAM" id="MobiDB-lite"/>
    </source>
</evidence>
<evidence type="ECO:0000305" key="4"/>
<sequence>MPTIAQLIRNKRAPKVKKTKSPALLFTYNSLHKKTTKNPSPLKSGVCTRVGTMTPKKPNSALRKYAKVRLSNGFEVLAYIPGEGHNLQEHSVVVIRGGRVKDLPGVRYHIVRGAGDASGVEKRRQQRSLYGAKRPKKEASK</sequence>
<proteinExistence type="inferred from homology"/>
<gene>
    <name evidence="2" type="primary">rpsL</name>
    <name type="ordered locus">UUR10_0614</name>
</gene>
<accession>B5ZC34</accession>
<name>RS12_UREU1</name>
<protein>
    <recommendedName>
        <fullName evidence="2">Small ribosomal subunit protein uS12</fullName>
    </recommendedName>
    <alternativeName>
        <fullName evidence="4">30S ribosomal protein S12</fullName>
    </alternativeName>
</protein>
<comment type="function">
    <text evidence="2">With S4 and S5 plays an important role in translational accuracy.</text>
</comment>
<comment type="function">
    <text evidence="2">Interacts with and stabilizes bases of the 16S rRNA that are involved in tRNA selection in the A site and with the mRNA backbone. Located at the interface of the 30S and 50S subunits, it traverses the body of the 30S subunit contacting proteins on the other side and probably holding the rRNA structure together. The combined cluster of proteins S8, S12 and S17 appears to hold together the shoulder and platform of the 30S subunit.</text>
</comment>
<comment type="subunit">
    <text evidence="2">Part of the 30S ribosomal subunit. Contacts proteins S8 and S17. May interact with IF1 in the 30S initiation complex.</text>
</comment>
<comment type="similarity">
    <text evidence="2">Belongs to the universal ribosomal protein uS12 family.</text>
</comment>
<organism>
    <name type="scientific">Ureaplasma urealyticum serovar 10 (strain ATCC 33699 / Western)</name>
    <dbReference type="NCBI Taxonomy" id="565575"/>
    <lineage>
        <taxon>Bacteria</taxon>
        <taxon>Bacillati</taxon>
        <taxon>Mycoplasmatota</taxon>
        <taxon>Mycoplasmoidales</taxon>
        <taxon>Mycoplasmoidaceae</taxon>
        <taxon>Ureaplasma</taxon>
    </lineage>
</organism>
<feature type="chain" id="PRO_1000123535" description="Small ribosomal subunit protein uS12">
    <location>
        <begin position="1"/>
        <end position="141"/>
    </location>
</feature>
<feature type="region of interest" description="Disordered" evidence="3">
    <location>
        <begin position="115"/>
        <end position="141"/>
    </location>
</feature>
<feature type="modified residue" description="3-methylthioaspartic acid" evidence="1">
    <location>
        <position position="102"/>
    </location>
</feature>